<feature type="chain" id="PRO_0000423416" description="Uncharacterized protein encoded by LINC01619">
    <location>
        <begin position="1"/>
        <end position="115"/>
    </location>
</feature>
<feature type="splice variant" id="VSP_047835" description="In isoform 2." evidence="1">
    <original>CQKEAGKFGTHRGKPMCFVRSLLRVQLLPRTFPANSFVISFFPSLIYPLQVYQLHFESSDKQRAMQFVTEG</original>
    <variation>STNCILRAQISREQCNLSQKDDYVYALSCLFPCLTQRRHKEKVSSAWINWRL</variation>
    <location>
        <begin position="45"/>
        <end position="115"/>
    </location>
</feature>
<feature type="splice variant" id="VSP_047836" description="In isoform 3." evidence="1">
    <original>CQKEAGKFGTHRGKPMCFVRSLLRVQLLPRTFPANSFVISFFPSLIYPLQVYQLHFESSDKQRAMQFVTEG</original>
    <variation>STNCILRAQISREQCNLSQKDDYVYALSCVCMCMYIRYFHA</variation>
    <location>
        <begin position="45"/>
        <end position="115"/>
    </location>
</feature>
<gene>
    <name evidence="3" type="primary">LINC01619</name>
    <name type="synonym">C12orf79</name>
</gene>
<proteinExistence type="uncertain"/>
<name>CL079_HUMAN</name>
<keyword id="KW-0025">Alternative splicing</keyword>
<keyword id="KW-1185">Reference proteome</keyword>
<evidence type="ECO:0000303" key="1">
    <source>
    </source>
</evidence>
<evidence type="ECO:0000305" key="2"/>
<evidence type="ECO:0000312" key="3">
    <source>
        <dbReference type="HGNC" id="HGNC:27409"/>
    </source>
</evidence>
<organism>
    <name type="scientific">Homo sapiens</name>
    <name type="common">Human</name>
    <dbReference type="NCBI Taxonomy" id="9606"/>
    <lineage>
        <taxon>Eukaryota</taxon>
        <taxon>Metazoa</taxon>
        <taxon>Chordata</taxon>
        <taxon>Craniata</taxon>
        <taxon>Vertebrata</taxon>
        <taxon>Euteleostomi</taxon>
        <taxon>Mammalia</taxon>
        <taxon>Eutheria</taxon>
        <taxon>Euarchontoglires</taxon>
        <taxon>Primates</taxon>
        <taxon>Haplorrhini</taxon>
        <taxon>Catarrhini</taxon>
        <taxon>Hominidae</taxon>
        <taxon>Homo</taxon>
    </lineage>
</organism>
<reference key="1">
    <citation type="journal article" date="2004" name="Nat. Genet.">
        <title>Complete sequencing and characterization of 21,243 full-length human cDNAs.</title>
        <authorList>
            <person name="Ota T."/>
            <person name="Suzuki Y."/>
            <person name="Nishikawa T."/>
            <person name="Otsuki T."/>
            <person name="Sugiyama T."/>
            <person name="Irie R."/>
            <person name="Wakamatsu A."/>
            <person name="Hayashi K."/>
            <person name="Sato H."/>
            <person name="Nagai K."/>
            <person name="Kimura K."/>
            <person name="Makita H."/>
            <person name="Sekine M."/>
            <person name="Obayashi M."/>
            <person name="Nishi T."/>
            <person name="Shibahara T."/>
            <person name="Tanaka T."/>
            <person name="Ishii S."/>
            <person name="Yamamoto J."/>
            <person name="Saito K."/>
            <person name="Kawai Y."/>
            <person name="Isono Y."/>
            <person name="Nakamura Y."/>
            <person name="Nagahari K."/>
            <person name="Murakami K."/>
            <person name="Yasuda T."/>
            <person name="Iwayanagi T."/>
            <person name="Wagatsuma M."/>
            <person name="Shiratori A."/>
            <person name="Sudo H."/>
            <person name="Hosoiri T."/>
            <person name="Kaku Y."/>
            <person name="Kodaira H."/>
            <person name="Kondo H."/>
            <person name="Sugawara M."/>
            <person name="Takahashi M."/>
            <person name="Kanda K."/>
            <person name="Yokoi T."/>
            <person name="Furuya T."/>
            <person name="Kikkawa E."/>
            <person name="Omura Y."/>
            <person name="Abe K."/>
            <person name="Kamihara K."/>
            <person name="Katsuta N."/>
            <person name="Sato K."/>
            <person name="Tanikawa M."/>
            <person name="Yamazaki M."/>
            <person name="Ninomiya K."/>
            <person name="Ishibashi T."/>
            <person name="Yamashita H."/>
            <person name="Murakawa K."/>
            <person name="Fujimori K."/>
            <person name="Tanai H."/>
            <person name="Kimata M."/>
            <person name="Watanabe M."/>
            <person name="Hiraoka S."/>
            <person name="Chiba Y."/>
            <person name="Ishida S."/>
            <person name="Ono Y."/>
            <person name="Takiguchi S."/>
            <person name="Watanabe S."/>
            <person name="Yosida M."/>
            <person name="Hotuta T."/>
            <person name="Kusano J."/>
            <person name="Kanehori K."/>
            <person name="Takahashi-Fujii A."/>
            <person name="Hara H."/>
            <person name="Tanase T.-O."/>
            <person name="Nomura Y."/>
            <person name="Togiya S."/>
            <person name="Komai F."/>
            <person name="Hara R."/>
            <person name="Takeuchi K."/>
            <person name="Arita M."/>
            <person name="Imose N."/>
            <person name="Musashino K."/>
            <person name="Yuuki H."/>
            <person name="Oshima A."/>
            <person name="Sasaki N."/>
            <person name="Aotsuka S."/>
            <person name="Yoshikawa Y."/>
            <person name="Matsunawa H."/>
            <person name="Ichihara T."/>
            <person name="Shiohata N."/>
            <person name="Sano S."/>
            <person name="Moriya S."/>
            <person name="Momiyama H."/>
            <person name="Satoh N."/>
            <person name="Takami S."/>
            <person name="Terashima Y."/>
            <person name="Suzuki O."/>
            <person name="Nakagawa S."/>
            <person name="Senoh A."/>
            <person name="Mizoguchi H."/>
            <person name="Goto Y."/>
            <person name="Shimizu F."/>
            <person name="Wakebe H."/>
            <person name="Hishigaki H."/>
            <person name="Watanabe T."/>
            <person name="Sugiyama A."/>
            <person name="Takemoto M."/>
            <person name="Kawakami B."/>
            <person name="Yamazaki M."/>
            <person name="Watanabe K."/>
            <person name="Kumagai A."/>
            <person name="Itakura S."/>
            <person name="Fukuzumi Y."/>
            <person name="Fujimori Y."/>
            <person name="Komiyama M."/>
            <person name="Tashiro H."/>
            <person name="Tanigami A."/>
            <person name="Fujiwara T."/>
            <person name="Ono T."/>
            <person name="Yamada K."/>
            <person name="Fujii Y."/>
            <person name="Ozaki K."/>
            <person name="Hirao M."/>
            <person name="Ohmori Y."/>
            <person name="Kawabata A."/>
            <person name="Hikiji T."/>
            <person name="Kobatake N."/>
            <person name="Inagaki H."/>
            <person name="Ikema Y."/>
            <person name="Okamoto S."/>
            <person name="Okitani R."/>
            <person name="Kawakami T."/>
            <person name="Noguchi S."/>
            <person name="Itoh T."/>
            <person name="Shigeta K."/>
            <person name="Senba T."/>
            <person name="Matsumura K."/>
            <person name="Nakajima Y."/>
            <person name="Mizuno T."/>
            <person name="Morinaga M."/>
            <person name="Sasaki M."/>
            <person name="Togashi T."/>
            <person name="Oyama M."/>
            <person name="Hata H."/>
            <person name="Watanabe M."/>
            <person name="Komatsu T."/>
            <person name="Mizushima-Sugano J."/>
            <person name="Satoh T."/>
            <person name="Shirai Y."/>
            <person name="Takahashi Y."/>
            <person name="Nakagawa K."/>
            <person name="Okumura K."/>
            <person name="Nagase T."/>
            <person name="Nomura N."/>
            <person name="Kikuchi H."/>
            <person name="Masuho Y."/>
            <person name="Yamashita R."/>
            <person name="Nakai K."/>
            <person name="Yada T."/>
            <person name="Nakamura Y."/>
            <person name="Ohara O."/>
            <person name="Isogai T."/>
            <person name="Sugano S."/>
        </authorList>
    </citation>
    <scope>NUCLEOTIDE SEQUENCE [LARGE SCALE MRNA] (ISOFORM 1)</scope>
    <source>
        <tissue>Brain</tissue>
    </source>
</reference>
<reference key="2">
    <citation type="journal article" date="2006" name="Nature">
        <title>The finished DNA sequence of human chromosome 12.</title>
        <authorList>
            <person name="Scherer S.E."/>
            <person name="Muzny D.M."/>
            <person name="Buhay C.J."/>
            <person name="Chen R."/>
            <person name="Cree A."/>
            <person name="Ding Y."/>
            <person name="Dugan-Rocha S."/>
            <person name="Gill R."/>
            <person name="Gunaratne P."/>
            <person name="Harris R.A."/>
            <person name="Hawes A.C."/>
            <person name="Hernandez J."/>
            <person name="Hodgson A.V."/>
            <person name="Hume J."/>
            <person name="Jackson A."/>
            <person name="Khan Z.M."/>
            <person name="Kovar-Smith C."/>
            <person name="Lewis L.R."/>
            <person name="Lozado R.J."/>
            <person name="Metzker M.L."/>
            <person name="Milosavljevic A."/>
            <person name="Miner G.R."/>
            <person name="Montgomery K.T."/>
            <person name="Morgan M.B."/>
            <person name="Nazareth L.V."/>
            <person name="Scott G."/>
            <person name="Sodergren E."/>
            <person name="Song X.-Z."/>
            <person name="Steffen D."/>
            <person name="Lovering R.C."/>
            <person name="Wheeler D.A."/>
            <person name="Worley K.C."/>
            <person name="Yuan Y."/>
            <person name="Zhang Z."/>
            <person name="Adams C.Q."/>
            <person name="Ansari-Lari M.A."/>
            <person name="Ayele M."/>
            <person name="Brown M.J."/>
            <person name="Chen G."/>
            <person name="Chen Z."/>
            <person name="Clerc-Blankenburg K.P."/>
            <person name="Davis C."/>
            <person name="Delgado O."/>
            <person name="Dinh H.H."/>
            <person name="Draper H."/>
            <person name="Gonzalez-Garay M.L."/>
            <person name="Havlak P."/>
            <person name="Jackson L.R."/>
            <person name="Jacob L.S."/>
            <person name="Kelly S.H."/>
            <person name="Li L."/>
            <person name="Li Z."/>
            <person name="Liu J."/>
            <person name="Liu W."/>
            <person name="Lu J."/>
            <person name="Maheshwari M."/>
            <person name="Nguyen B.-V."/>
            <person name="Okwuonu G.O."/>
            <person name="Pasternak S."/>
            <person name="Perez L.M."/>
            <person name="Plopper F.J.H."/>
            <person name="Santibanez J."/>
            <person name="Shen H."/>
            <person name="Tabor P.E."/>
            <person name="Verduzco D."/>
            <person name="Waldron L."/>
            <person name="Wang Q."/>
            <person name="Williams G.A."/>
            <person name="Zhang J."/>
            <person name="Zhou J."/>
            <person name="Allen C.C."/>
            <person name="Amin A.G."/>
            <person name="Anyalebechi V."/>
            <person name="Bailey M."/>
            <person name="Barbaria J.A."/>
            <person name="Bimage K.E."/>
            <person name="Bryant N.P."/>
            <person name="Burch P.E."/>
            <person name="Burkett C.E."/>
            <person name="Burrell K.L."/>
            <person name="Calderon E."/>
            <person name="Cardenas V."/>
            <person name="Carter K."/>
            <person name="Casias K."/>
            <person name="Cavazos I."/>
            <person name="Cavazos S.R."/>
            <person name="Ceasar H."/>
            <person name="Chacko J."/>
            <person name="Chan S.N."/>
            <person name="Chavez D."/>
            <person name="Christopoulos C."/>
            <person name="Chu J."/>
            <person name="Cockrell R."/>
            <person name="Cox C.D."/>
            <person name="Dang M."/>
            <person name="Dathorne S.R."/>
            <person name="David R."/>
            <person name="Davis C.M."/>
            <person name="Davy-Carroll L."/>
            <person name="Deshazo D.R."/>
            <person name="Donlin J.E."/>
            <person name="D'Souza L."/>
            <person name="Eaves K.A."/>
            <person name="Egan A."/>
            <person name="Emery-Cohen A.J."/>
            <person name="Escotto M."/>
            <person name="Flagg N."/>
            <person name="Forbes L.D."/>
            <person name="Gabisi A.M."/>
            <person name="Garza M."/>
            <person name="Hamilton C."/>
            <person name="Henderson N."/>
            <person name="Hernandez O."/>
            <person name="Hines S."/>
            <person name="Hogues M.E."/>
            <person name="Huang M."/>
            <person name="Idlebird D.G."/>
            <person name="Johnson R."/>
            <person name="Jolivet A."/>
            <person name="Jones S."/>
            <person name="Kagan R."/>
            <person name="King L.M."/>
            <person name="Leal B."/>
            <person name="Lebow H."/>
            <person name="Lee S."/>
            <person name="LeVan J.M."/>
            <person name="Lewis L.C."/>
            <person name="London P."/>
            <person name="Lorensuhewa L.M."/>
            <person name="Loulseged H."/>
            <person name="Lovett D.A."/>
            <person name="Lucier A."/>
            <person name="Lucier R.L."/>
            <person name="Ma J."/>
            <person name="Madu R.C."/>
            <person name="Mapua P."/>
            <person name="Martindale A.D."/>
            <person name="Martinez E."/>
            <person name="Massey E."/>
            <person name="Mawhiney S."/>
            <person name="Meador M.G."/>
            <person name="Mendez S."/>
            <person name="Mercado C."/>
            <person name="Mercado I.C."/>
            <person name="Merritt C.E."/>
            <person name="Miner Z.L."/>
            <person name="Minja E."/>
            <person name="Mitchell T."/>
            <person name="Mohabbat F."/>
            <person name="Mohabbat K."/>
            <person name="Montgomery B."/>
            <person name="Moore N."/>
            <person name="Morris S."/>
            <person name="Munidasa M."/>
            <person name="Ngo R.N."/>
            <person name="Nguyen N.B."/>
            <person name="Nickerson E."/>
            <person name="Nwaokelemeh O.O."/>
            <person name="Nwokenkwo S."/>
            <person name="Obregon M."/>
            <person name="Oguh M."/>
            <person name="Oragunye N."/>
            <person name="Oviedo R.J."/>
            <person name="Parish B.J."/>
            <person name="Parker D.N."/>
            <person name="Parrish J."/>
            <person name="Parks K.L."/>
            <person name="Paul H.A."/>
            <person name="Payton B.A."/>
            <person name="Perez A."/>
            <person name="Perrin W."/>
            <person name="Pickens A."/>
            <person name="Primus E.L."/>
            <person name="Pu L.-L."/>
            <person name="Puazo M."/>
            <person name="Quiles M.M."/>
            <person name="Quiroz J.B."/>
            <person name="Rabata D."/>
            <person name="Reeves K."/>
            <person name="Ruiz S.J."/>
            <person name="Shao H."/>
            <person name="Sisson I."/>
            <person name="Sonaike T."/>
            <person name="Sorelle R.P."/>
            <person name="Sutton A.E."/>
            <person name="Svatek A.F."/>
            <person name="Svetz L.A."/>
            <person name="Tamerisa K.S."/>
            <person name="Taylor T.R."/>
            <person name="Teague B."/>
            <person name="Thomas N."/>
            <person name="Thorn R.D."/>
            <person name="Trejos Z.Y."/>
            <person name="Trevino B.K."/>
            <person name="Ukegbu O.N."/>
            <person name="Urban J.B."/>
            <person name="Vasquez L.I."/>
            <person name="Vera V.A."/>
            <person name="Villasana D.M."/>
            <person name="Wang L."/>
            <person name="Ward-Moore S."/>
            <person name="Warren J.T."/>
            <person name="Wei X."/>
            <person name="White F."/>
            <person name="Williamson A.L."/>
            <person name="Wleczyk R."/>
            <person name="Wooden H.S."/>
            <person name="Wooden S.H."/>
            <person name="Yen J."/>
            <person name="Yoon L."/>
            <person name="Yoon V."/>
            <person name="Zorrilla S.E."/>
            <person name="Nelson D."/>
            <person name="Kucherlapati R."/>
            <person name="Weinstock G."/>
            <person name="Gibbs R.A."/>
        </authorList>
    </citation>
    <scope>NUCLEOTIDE SEQUENCE [LARGE SCALE GENOMIC DNA]</scope>
</reference>
<reference key="3">
    <citation type="submission" date="2005-07" db="EMBL/GenBank/DDBJ databases">
        <authorList>
            <person name="Mural R.J."/>
            <person name="Istrail S."/>
            <person name="Sutton G.G."/>
            <person name="Florea L."/>
            <person name="Halpern A.L."/>
            <person name="Mobarry C.M."/>
            <person name="Lippert R."/>
            <person name="Walenz B."/>
            <person name="Shatkay H."/>
            <person name="Dew I."/>
            <person name="Miller J.R."/>
            <person name="Flanigan M.J."/>
            <person name="Edwards N.J."/>
            <person name="Bolanos R."/>
            <person name="Fasulo D."/>
            <person name="Halldorsson B.V."/>
            <person name="Hannenhalli S."/>
            <person name="Turner R."/>
            <person name="Yooseph S."/>
            <person name="Lu F."/>
            <person name="Nusskern D.R."/>
            <person name="Shue B.C."/>
            <person name="Zheng X.H."/>
            <person name="Zhong F."/>
            <person name="Delcher A.L."/>
            <person name="Huson D.H."/>
            <person name="Kravitz S.A."/>
            <person name="Mouchard L."/>
            <person name="Reinert K."/>
            <person name="Remington K.A."/>
            <person name="Clark A.G."/>
            <person name="Waterman M.S."/>
            <person name="Eichler E.E."/>
            <person name="Adams M.D."/>
            <person name="Hunkapiller M.W."/>
            <person name="Myers E.W."/>
            <person name="Venter J.C."/>
        </authorList>
    </citation>
    <scope>NUCLEOTIDE SEQUENCE [LARGE SCALE GENOMIC DNA]</scope>
</reference>
<reference key="4">
    <citation type="journal article" date="2004" name="Genome Res.">
        <title>The status, quality, and expansion of the NIH full-length cDNA project: the Mammalian Gene Collection (MGC).</title>
        <authorList>
            <consortium name="The MGC Project Team"/>
        </authorList>
    </citation>
    <scope>NUCLEOTIDE SEQUENCE [LARGE SCALE MRNA] (ISOFORMS 2 AND 3)</scope>
</reference>
<comment type="alternative products">
    <event type="alternative splicing"/>
    <isoform>
        <id>G3V211-1</id>
        <name>1</name>
        <sequence type="displayed"/>
    </isoform>
    <isoform>
        <id>G3V211-2</id>
        <name>2</name>
        <sequence type="described" ref="VSP_047835"/>
    </isoform>
    <isoform>
        <id>G3V211-3</id>
        <name>3</name>
        <sequence type="described" ref="VSP_047836"/>
    </isoform>
</comment>
<comment type="caution">
    <text evidence="2">Product of a dubious CDS prediction. May be a long intergenic non-protein coding RNA. No experimental confirmation available.</text>
</comment>
<sequence>MNVCCSSHPVNEKVWKPSSRKWSSKVWSMDEFDLQTACYWFMTRCQKEAGKFGTHRGKPMCFVRSLLRVQLLPRTFPANSFVISFFPSLIYPLQVYQLHFESSDKQRAMQFVTEG</sequence>
<protein>
    <recommendedName>
        <fullName evidence="2">Uncharacterized protein encoded by LINC01619</fullName>
    </recommendedName>
</protein>
<accession>G3V211</accession>
<accession>F8VRL5</accession>
<accession>F8VVU4</accession>
<dbReference type="EMBL" id="AK055439">
    <property type="status" value="NOT_ANNOTATED_CDS"/>
    <property type="molecule type" value="mRNA"/>
</dbReference>
<dbReference type="EMBL" id="AC025164">
    <property type="status" value="NOT_ANNOTATED_CDS"/>
    <property type="molecule type" value="Genomic_DNA"/>
</dbReference>
<dbReference type="EMBL" id="AC123512">
    <property type="status" value="NOT_ANNOTATED_CDS"/>
    <property type="molecule type" value="Genomic_DNA"/>
</dbReference>
<dbReference type="EMBL" id="CH471054">
    <property type="protein sequence ID" value="EAW97463.1"/>
    <property type="molecule type" value="Genomic_DNA"/>
</dbReference>
<dbReference type="EMBL" id="BC107595">
    <property type="status" value="NOT_ANNOTATED_CDS"/>
    <property type="molecule type" value="mRNA"/>
</dbReference>
<dbReference type="EMBL" id="BC122534">
    <property type="status" value="NOT_ANNOTATED_CDS"/>
    <property type="molecule type" value="mRNA"/>
</dbReference>
<dbReference type="BioMuta" id="HGNC:27409"/>
<dbReference type="PaxDb" id="9606-ENSP00000477724"/>
<dbReference type="PeptideAtlas" id="G3V211"/>
<dbReference type="UCSC" id="uc058rrd.1">
    <molecule id="G3V211-1"/>
    <property type="organism name" value="human"/>
</dbReference>
<dbReference type="AGR" id="HGNC:27409"/>
<dbReference type="GeneCards" id="LINC01619"/>
<dbReference type="HGNC" id="HGNC:27409">
    <property type="gene designation" value="LINC01619"/>
</dbReference>
<dbReference type="neXtProt" id="NX_G3V211"/>
<dbReference type="eggNOG" id="ENOG502TEMD">
    <property type="taxonomic scope" value="Eukaryota"/>
</dbReference>
<dbReference type="HOGENOM" id="CLU_2256291_0_0_1"/>
<dbReference type="InParanoid" id="G3V211"/>
<dbReference type="PAN-GO" id="G3V211">
    <property type="GO annotations" value="0 GO annotations based on evolutionary models"/>
</dbReference>
<dbReference type="ChiTaRS" id="LINC01619">
    <property type="organism name" value="human"/>
</dbReference>
<dbReference type="Pharos" id="G3V211">
    <property type="development level" value="Tdark"/>
</dbReference>
<dbReference type="Proteomes" id="UP000005640">
    <property type="component" value="Unplaced"/>
</dbReference>
<dbReference type="RNAct" id="G3V211">
    <property type="molecule type" value="protein"/>
</dbReference>